<evidence type="ECO:0000250" key="1">
    <source>
        <dbReference type="UniProtKB" id="P0CK64"/>
    </source>
</evidence>
<evidence type="ECO:0000250" key="2">
    <source>
        <dbReference type="UniProtKB" id="P0CK68"/>
    </source>
</evidence>
<evidence type="ECO:0000250" key="3">
    <source>
        <dbReference type="UniProtKB" id="P0DJW8"/>
    </source>
</evidence>
<evidence type="ECO:0000250" key="4">
    <source>
        <dbReference type="UniProtKB" id="P0DXO5"/>
    </source>
</evidence>
<evidence type="ECO:0000269" key="5">
    <source>
    </source>
</evidence>
<evidence type="ECO:0000305" key="6"/>
<organism>
    <name type="scientific">Influenza A virus (strain A/wyoming/03/2003 H3N2)</name>
    <dbReference type="NCBI Taxonomy" id="480024"/>
    <lineage>
        <taxon>Viruses</taxon>
        <taxon>Riboviria</taxon>
        <taxon>Orthornavirae</taxon>
        <taxon>Negarnaviricota</taxon>
        <taxon>Polyploviricotina</taxon>
        <taxon>Insthoviricetes</taxon>
        <taxon>Articulavirales</taxon>
        <taxon>Orthomyxoviridae</taxon>
        <taxon>Alphainfluenzavirus</taxon>
        <taxon>Alphainfluenzavirus influenzae</taxon>
        <taxon>Influenza A virus</taxon>
    </lineage>
</organism>
<organismHost>
    <name type="scientific">Homo sapiens</name>
    <name type="common">Human</name>
    <dbReference type="NCBI Taxonomy" id="9606"/>
</organismHost>
<proteinExistence type="evidence at protein level"/>
<dbReference type="EMBL" id="EU097812">
    <property type="status" value="NOT_ANNOTATED_CDS"/>
    <property type="molecule type" value="Viral_cRNA"/>
</dbReference>
<reference key="1">
    <citation type="journal article" date="2008" name="Virol. J.">
        <title>The evolution of human influenza A viruses from 1999 to 2006: a complete genome study.</title>
        <authorList>
            <person name="Bragstad K."/>
            <person name="Nielsen L.P."/>
            <person name="Fomsgaard A."/>
        </authorList>
    </citation>
    <scope>NUCLEOTIDE SEQUENCE [LARGE SCALE GENOMIC DNA]</scope>
    <source>
        <strain>A/Wyoming/03/2003</strain>
    </source>
</reference>
<reference key="2">
    <citation type="journal article" date="2023" name="Nat. Commun.">
        <title>Proteomic and genetic analyses of influenza A viruses identify pan-viral host targets.</title>
        <authorList>
            <person name="Haas K.M."/>
            <person name="McGregor M.J."/>
            <person name="Bouhaddou M."/>
            <person name="Polacco B.J."/>
            <person name="Kim E.Y."/>
            <person name="Nguyen T.T."/>
            <person name="Newton B.W."/>
            <person name="Urbanowski M."/>
            <person name="Kim H."/>
            <person name="Williams M.A.P."/>
            <person name="Rezelj V.V."/>
            <person name="Hardy A."/>
            <person name="Fossati A."/>
            <person name="Stevenson E.J."/>
            <person name="Sukerman E."/>
            <person name="Kim T."/>
            <person name="Penugonda S."/>
            <person name="Moreno E."/>
            <person name="Braberg H."/>
            <person name="Zhou Y."/>
            <person name="Metreveli G."/>
            <person name="Harjai B."/>
            <person name="Tummino T.A."/>
            <person name="Melnyk J.E."/>
            <person name="Soucheray M."/>
            <person name="Batra J."/>
            <person name="Pache L."/>
            <person name="Martin-Sancho L."/>
            <person name="Carlson-Stevermer J."/>
            <person name="Jureka A.S."/>
            <person name="Basler C.F."/>
            <person name="Shokat K.M."/>
            <person name="Shoichet B.K."/>
            <person name="Shriver L.P."/>
            <person name="Johnson J.R."/>
            <person name="Shaw M.L."/>
            <person name="Chanda S.K."/>
            <person name="Roden D.M."/>
            <person name="Carter T.C."/>
            <person name="Kottyan L.C."/>
            <person name="Chisholm R.L."/>
            <person name="Pacheco J.A."/>
            <person name="Smith M.E."/>
            <person name="Schrodi S.J."/>
            <person name="Albrecht R.A."/>
            <person name="Vignuzzi M."/>
            <person name="Zuliani-Alvarez L."/>
            <person name="Swaney D.L."/>
            <person name="Eckhardt M."/>
            <person name="Wolinsky S.M."/>
            <person name="White K.M."/>
            <person name="Hultquist J.F."/>
            <person name="Kaake R.M."/>
            <person name="Garcia-Sastre A."/>
            <person name="Krogan N.J."/>
        </authorList>
    </citation>
    <scope>INTERACTION WITH HOST RACK1</scope>
</reference>
<protein>
    <recommendedName>
        <fullName>Protein PA-X</fullName>
    </recommendedName>
</protein>
<keyword id="KW-1132">Decay of host mRNAs by virus</keyword>
<keyword id="KW-1262">Eukaryotic host gene expression shutoff by virus</keyword>
<keyword id="KW-1035">Host cytoplasm</keyword>
<keyword id="KW-1190">Host gene expression shutoff by virus</keyword>
<keyword id="KW-1192">Host mRNA suppression by virus</keyword>
<keyword id="KW-1048">Host nucleus</keyword>
<keyword id="KW-0945">Host-virus interaction</keyword>
<keyword id="KW-0688">Ribosomal frameshifting</keyword>
<accession>P0DXO6</accession>
<sequence length="252" mass="29399">MEDFVRQCFNPMIVELAEKAMKEYGEDLKIETNKFAAICTHLEVCFMYSDFHFINEQGESIVVELDDPNALLKHRFEIIEGRDRTMAWTVVNSICNTTGAEKPKFLPDLYDYKENRFIEIGVTRREVHIYYLEKANKIKSENTHIHIFSFTGEEMATKADYTLDEESRARIKTRLFTIRQEMANRGLWDSFVSPKEAKKQLKKNLKSQELCVGLPTKVSHRTSPALRILEPMWMDSNRTAALRASFLKCPKK</sequence>
<comment type="function">
    <text evidence="1 4">Plays a major role in the shutoff of the host protein expression by cleaving mRNAs probably via an endonuclease activity. This host shutoff allows the virus to escape from the host antiviral response (By similarity). Hijacks host RNA splicing machinery to selectively target host RNAs containing introns for destruction (By similarity). This may explain the preferential degradation of RNAs that have undergone co- or post-transcriptional processing (By similarity).</text>
</comment>
<comment type="subunit">
    <text evidence="5">Interacts with host RACK1.</text>
</comment>
<comment type="subcellular location">
    <subcellularLocation>
        <location evidence="4">Host cytoplasm</location>
    </subcellularLocation>
    <subcellularLocation>
        <location evidence="4">Host nucleus</location>
    </subcellularLocation>
</comment>
<comment type="alternative products">
    <event type="ribosomal frameshifting"/>
    <isoform>
        <id>P0DXO6-1</id>
        <name>PA-X</name>
        <sequence type="displayed"/>
    </isoform>
    <isoform>
        <id>P0DXO6-2</id>
        <name>PA</name>
        <sequence type="not described"/>
    </isoform>
</comment>
<comment type="domain">
    <text evidence="1 4">The probable endonuclease active site in the N-terminus and the basic amino acid cluster in the C-terminus are important for the shutoff activity. The C-terminus acts as a nuclear localization signal (By similarity). The C-terminus is recruited to host protein complexes involved in nuclear Pol II RNA processing (By similarity).</text>
</comment>
<comment type="similarity">
    <text evidence="6">Belongs to the influenza viruses PA-X family.</text>
</comment>
<name>PAX_I03A2</name>
<gene>
    <name type="primary">PA</name>
</gene>
<feature type="chain" id="PRO_0000462495" description="Protein PA-X">
    <location>
        <begin position="1"/>
        <end position="252"/>
    </location>
</feature>
<feature type="active site" evidence="2">
    <location>
        <position position="80"/>
    </location>
</feature>
<feature type="active site" evidence="2">
    <location>
        <position position="108"/>
    </location>
</feature>
<feature type="site" description="Important for efficient shutoff activity and nuclear localization" evidence="4">
    <location>
        <position position="195"/>
    </location>
</feature>
<feature type="site" description="Important for efficient shutoff activity and nuclear localization" evidence="4">
    <location>
        <position position="198"/>
    </location>
</feature>
<feature type="site" description="Important for efficient shutoff activity and nuclear localization" evidence="4">
    <location>
        <position position="199"/>
    </location>
</feature>
<feature type="site" description="Important for efficient shutoff activity" evidence="3">
    <location>
        <position position="202"/>
    </location>
</feature>
<feature type="site" description="Important for efficient shutoff activity" evidence="3">
    <location>
        <position position="203"/>
    </location>
</feature>
<feature type="site" description="Important for efficient shutoff activity" evidence="3">
    <location>
        <position position="206"/>
    </location>
</feature>